<feature type="chain" id="PRO_1000013639" description="Ion-translocating oxidoreductase complex subunit B">
    <location>
        <begin position="1"/>
        <end position="192"/>
    </location>
</feature>
<feature type="domain" description="4Fe-4S" evidence="1">
    <location>
        <begin position="32"/>
        <end position="91"/>
    </location>
</feature>
<feature type="domain" description="4Fe-4S ferredoxin-type 1" evidence="1">
    <location>
        <begin position="108"/>
        <end position="137"/>
    </location>
</feature>
<feature type="domain" description="4Fe-4S ferredoxin-type 2" evidence="1">
    <location>
        <begin position="138"/>
        <end position="167"/>
    </location>
</feature>
<feature type="region of interest" description="Hydrophobic" evidence="1">
    <location>
        <begin position="1"/>
        <end position="26"/>
    </location>
</feature>
<feature type="binding site" evidence="1">
    <location>
        <position position="49"/>
    </location>
    <ligand>
        <name>[4Fe-4S] cluster</name>
        <dbReference type="ChEBI" id="CHEBI:49883"/>
        <label>1</label>
    </ligand>
</feature>
<feature type="binding site" evidence="1">
    <location>
        <position position="52"/>
    </location>
    <ligand>
        <name>[4Fe-4S] cluster</name>
        <dbReference type="ChEBI" id="CHEBI:49883"/>
        <label>1</label>
    </ligand>
</feature>
<feature type="binding site" evidence="1">
    <location>
        <position position="57"/>
    </location>
    <ligand>
        <name>[4Fe-4S] cluster</name>
        <dbReference type="ChEBI" id="CHEBI:49883"/>
        <label>1</label>
    </ligand>
</feature>
<feature type="binding site" evidence="1">
    <location>
        <position position="74"/>
    </location>
    <ligand>
        <name>[4Fe-4S] cluster</name>
        <dbReference type="ChEBI" id="CHEBI:49883"/>
        <label>1</label>
    </ligand>
</feature>
<feature type="binding site" evidence="1">
    <location>
        <position position="117"/>
    </location>
    <ligand>
        <name>[4Fe-4S] cluster</name>
        <dbReference type="ChEBI" id="CHEBI:49883"/>
        <label>2</label>
    </ligand>
</feature>
<feature type="binding site" evidence="1">
    <location>
        <position position="120"/>
    </location>
    <ligand>
        <name>[4Fe-4S] cluster</name>
        <dbReference type="ChEBI" id="CHEBI:49883"/>
        <label>2</label>
    </ligand>
</feature>
<feature type="binding site" evidence="1">
    <location>
        <position position="123"/>
    </location>
    <ligand>
        <name>[4Fe-4S] cluster</name>
        <dbReference type="ChEBI" id="CHEBI:49883"/>
        <label>2</label>
    </ligand>
</feature>
<feature type="binding site" evidence="1">
    <location>
        <position position="127"/>
    </location>
    <ligand>
        <name>[4Fe-4S] cluster</name>
        <dbReference type="ChEBI" id="CHEBI:49883"/>
        <label>3</label>
    </ligand>
</feature>
<feature type="binding site" evidence="1">
    <location>
        <position position="147"/>
    </location>
    <ligand>
        <name>[4Fe-4S] cluster</name>
        <dbReference type="ChEBI" id="CHEBI:49883"/>
        <label>3</label>
    </ligand>
</feature>
<feature type="binding site" evidence="1">
    <location>
        <position position="150"/>
    </location>
    <ligand>
        <name>[4Fe-4S] cluster</name>
        <dbReference type="ChEBI" id="CHEBI:49883"/>
        <label>3</label>
    </ligand>
</feature>
<feature type="binding site" evidence="1">
    <location>
        <position position="153"/>
    </location>
    <ligand>
        <name>[4Fe-4S] cluster</name>
        <dbReference type="ChEBI" id="CHEBI:49883"/>
        <label>3</label>
    </ligand>
</feature>
<feature type="binding site" evidence="1">
    <location>
        <position position="157"/>
    </location>
    <ligand>
        <name>[4Fe-4S] cluster</name>
        <dbReference type="ChEBI" id="CHEBI:49883"/>
        <label>2</label>
    </ligand>
</feature>
<name>RNFB_CITK8</name>
<protein>
    <recommendedName>
        <fullName evidence="1">Ion-translocating oxidoreductase complex subunit B</fullName>
        <ecNumber evidence="1">7.-.-.-</ecNumber>
    </recommendedName>
    <alternativeName>
        <fullName evidence="1">Rnf electron transport complex subunit B</fullName>
    </alternativeName>
</protein>
<gene>
    <name evidence="1" type="primary">rnfB</name>
    <name type="ordered locus">CKO_01640</name>
</gene>
<reference key="1">
    <citation type="submission" date="2007-08" db="EMBL/GenBank/DDBJ databases">
        <authorList>
            <consortium name="The Citrobacter koseri Genome Sequencing Project"/>
            <person name="McClelland M."/>
            <person name="Sanderson E.K."/>
            <person name="Porwollik S."/>
            <person name="Spieth J."/>
            <person name="Clifton W.S."/>
            <person name="Latreille P."/>
            <person name="Courtney L."/>
            <person name="Wang C."/>
            <person name="Pepin K."/>
            <person name="Bhonagiri V."/>
            <person name="Nash W."/>
            <person name="Johnson M."/>
            <person name="Thiruvilangam P."/>
            <person name="Wilson R."/>
        </authorList>
    </citation>
    <scope>NUCLEOTIDE SEQUENCE [LARGE SCALE GENOMIC DNA]</scope>
    <source>
        <strain>ATCC BAA-895 / CDC 4225-83 / SGSC4696</strain>
    </source>
</reference>
<proteinExistence type="inferred from homology"/>
<organism>
    <name type="scientific">Citrobacter koseri (strain ATCC BAA-895 / CDC 4225-83 / SGSC4696)</name>
    <dbReference type="NCBI Taxonomy" id="290338"/>
    <lineage>
        <taxon>Bacteria</taxon>
        <taxon>Pseudomonadati</taxon>
        <taxon>Pseudomonadota</taxon>
        <taxon>Gammaproteobacteria</taxon>
        <taxon>Enterobacterales</taxon>
        <taxon>Enterobacteriaceae</taxon>
        <taxon>Citrobacter</taxon>
    </lineage>
</organism>
<evidence type="ECO:0000255" key="1">
    <source>
        <dbReference type="HAMAP-Rule" id="MF_00463"/>
    </source>
</evidence>
<keyword id="KW-0004">4Fe-4S</keyword>
<keyword id="KW-0997">Cell inner membrane</keyword>
<keyword id="KW-1003">Cell membrane</keyword>
<keyword id="KW-0249">Electron transport</keyword>
<keyword id="KW-0408">Iron</keyword>
<keyword id="KW-0411">Iron-sulfur</keyword>
<keyword id="KW-0472">Membrane</keyword>
<keyword id="KW-0479">Metal-binding</keyword>
<keyword id="KW-1185">Reference proteome</keyword>
<keyword id="KW-0677">Repeat</keyword>
<keyword id="KW-1278">Translocase</keyword>
<keyword id="KW-0813">Transport</keyword>
<dbReference type="EC" id="7.-.-.-" evidence="1"/>
<dbReference type="EMBL" id="CP000822">
    <property type="protein sequence ID" value="ABV12772.1"/>
    <property type="molecule type" value="Genomic_DNA"/>
</dbReference>
<dbReference type="STRING" id="290338.CKO_01640"/>
<dbReference type="GeneID" id="45135682"/>
<dbReference type="KEGG" id="cko:CKO_01640"/>
<dbReference type="HOGENOM" id="CLU_063448_2_0_6"/>
<dbReference type="OrthoDB" id="9789936at2"/>
<dbReference type="Proteomes" id="UP000008148">
    <property type="component" value="Chromosome"/>
</dbReference>
<dbReference type="GO" id="GO:0005886">
    <property type="term" value="C:plasma membrane"/>
    <property type="evidence" value="ECO:0007669"/>
    <property type="project" value="UniProtKB-SubCell"/>
</dbReference>
<dbReference type="GO" id="GO:0051539">
    <property type="term" value="F:4 iron, 4 sulfur cluster binding"/>
    <property type="evidence" value="ECO:0007669"/>
    <property type="project" value="UniProtKB-UniRule"/>
</dbReference>
<dbReference type="GO" id="GO:0009055">
    <property type="term" value="F:electron transfer activity"/>
    <property type="evidence" value="ECO:0007669"/>
    <property type="project" value="InterPro"/>
</dbReference>
<dbReference type="GO" id="GO:0046872">
    <property type="term" value="F:metal ion binding"/>
    <property type="evidence" value="ECO:0007669"/>
    <property type="project" value="UniProtKB-KW"/>
</dbReference>
<dbReference type="GO" id="GO:0022900">
    <property type="term" value="P:electron transport chain"/>
    <property type="evidence" value="ECO:0007669"/>
    <property type="project" value="UniProtKB-UniRule"/>
</dbReference>
<dbReference type="FunFam" id="1.10.15.40:FF:000001">
    <property type="entry name" value="Ion-translocating oxidoreductase complex subunit B"/>
    <property type="match status" value="1"/>
</dbReference>
<dbReference type="Gene3D" id="3.30.70.20">
    <property type="match status" value="1"/>
</dbReference>
<dbReference type="Gene3D" id="1.10.15.40">
    <property type="entry name" value="Electron transport complex subunit B, putative Fe-S cluster"/>
    <property type="match status" value="1"/>
</dbReference>
<dbReference type="HAMAP" id="MF_00463">
    <property type="entry name" value="RsxB_RnfB"/>
    <property type="match status" value="1"/>
</dbReference>
<dbReference type="InterPro" id="IPR007202">
    <property type="entry name" value="4Fe-4S_dom"/>
</dbReference>
<dbReference type="InterPro" id="IPR017896">
    <property type="entry name" value="4Fe4S_Fe-S-bd"/>
</dbReference>
<dbReference type="InterPro" id="IPR017900">
    <property type="entry name" value="4Fe4S_Fe_S_CS"/>
</dbReference>
<dbReference type="InterPro" id="IPR050395">
    <property type="entry name" value="4Fe4S_Ferredoxin_RnfB"/>
</dbReference>
<dbReference type="InterPro" id="IPR010207">
    <property type="entry name" value="Elect_transpt_cplx_RnfB/RsxB"/>
</dbReference>
<dbReference type="InterPro" id="IPR016463">
    <property type="entry name" value="RnfB/RsxB_Proteobac"/>
</dbReference>
<dbReference type="NCBIfam" id="NF003475">
    <property type="entry name" value="PRK05113.1"/>
    <property type="match status" value="1"/>
</dbReference>
<dbReference type="NCBIfam" id="TIGR01944">
    <property type="entry name" value="rnfB"/>
    <property type="match status" value="1"/>
</dbReference>
<dbReference type="PANTHER" id="PTHR43560">
    <property type="entry name" value="ION-TRANSLOCATING OXIDOREDUCTASE COMPLEX SUBUNIT B"/>
    <property type="match status" value="1"/>
</dbReference>
<dbReference type="PANTHER" id="PTHR43560:SF1">
    <property type="entry name" value="ION-TRANSLOCATING OXIDOREDUCTASE COMPLEX SUBUNIT B"/>
    <property type="match status" value="1"/>
</dbReference>
<dbReference type="Pfam" id="PF14697">
    <property type="entry name" value="Fer4_21"/>
    <property type="match status" value="1"/>
</dbReference>
<dbReference type="Pfam" id="PF04060">
    <property type="entry name" value="FeS"/>
    <property type="match status" value="1"/>
</dbReference>
<dbReference type="PIRSF" id="PIRSF005784">
    <property type="entry name" value="Elect_transpt_RnfB"/>
    <property type="match status" value="1"/>
</dbReference>
<dbReference type="SUPFAM" id="SSF54862">
    <property type="entry name" value="4Fe-4S ferredoxins"/>
    <property type="match status" value="1"/>
</dbReference>
<dbReference type="PROSITE" id="PS51656">
    <property type="entry name" value="4FE4S"/>
    <property type="match status" value="1"/>
</dbReference>
<dbReference type="PROSITE" id="PS00198">
    <property type="entry name" value="4FE4S_FER_1"/>
    <property type="match status" value="2"/>
</dbReference>
<dbReference type="PROSITE" id="PS51379">
    <property type="entry name" value="4FE4S_FER_2"/>
    <property type="match status" value="2"/>
</dbReference>
<accession>A8AH09</accession>
<comment type="function">
    <text evidence="1">Part of a membrane-bound complex that couples electron transfer with translocation of ions across the membrane.</text>
</comment>
<comment type="cofactor">
    <cofactor evidence="1">
        <name>[4Fe-4S] cluster</name>
        <dbReference type="ChEBI" id="CHEBI:49883"/>
    </cofactor>
    <text evidence="1">Binds 3 [4Fe-4S] clusters.</text>
</comment>
<comment type="subunit">
    <text evidence="1">The complex is composed of six subunits: RnfA, RnfB, RnfC, RnfD, RnfE and RnfG.</text>
</comment>
<comment type="subcellular location">
    <subcellularLocation>
        <location evidence="1">Cell inner membrane</location>
    </subcellularLocation>
</comment>
<comment type="similarity">
    <text evidence="1">Belongs to the 4Fe4S bacterial-type ferredoxin family. RnfB subfamily.</text>
</comment>
<sequence length="192" mass="20592">MNAIWIAVVAVSLLGLAFGAILGYASRRFAVEDDPVVEKIDEILPQSQCGQCGYPGCRPYAEAIGSQGEKINRCAPGGEAVMLKIATLLNVDPQPIDGDEQEVAPVRMLAVIDENNCIGCTKCIQACPVDAIVGATRAMHTVMSDLCTGCNLCVDPCPTQCIELRPVAETPDSWKWDLNTIPVRIIPVEQHA</sequence>